<gene>
    <name type="primary">Syt9</name>
    <name evidence="10" type="synonym">Syt5</name>
</gene>
<name>SYT9_MOUSE</name>
<comment type="function">
    <text>May be involved in Ca(2+)-dependent exocytosis of secretory vesicles through Ca(2+) and phospholipid binding to the C2 domain or may serve as Ca(2+) sensors in the process of vesicular trafficking and exocytosis.</text>
</comment>
<comment type="cofactor">
    <cofactor evidence="4">
        <name>Ca(2+)</name>
        <dbReference type="ChEBI" id="CHEBI:29108"/>
    </cofactor>
    <text evidence="2">Binds 3 Ca(2+) ions per subunit. The ions are bound to the C2 domains.</text>
</comment>
<comment type="subunit">
    <text evidence="6 7 8 9">Homodimer; disulfide-linked via the cysteine motif (PubMed:10531343). Can also form heterodimers with SYT3, SYT6, SYT7 and SYT10 (PubMed:10531343, PubMed:10531344, PubMed:10871604). Interacts with DNAJC5 and SNAP25, but not with HSC70 (PubMed:20847230). The interaction with DNAJC5 is stimulated tenfold in presence of calcium while the interaction with SNAP25 is inhibited (PubMed:20847230).</text>
</comment>
<comment type="interaction">
    <interactant intactId="EBI-458006">
        <id>Q9R0N9</id>
    </interactant>
    <interactant intactId="EBI-5239459">
        <id>Q9R0N4</id>
        <label>Syt10</label>
    </interactant>
    <organismsDiffer>false</organismsDiffer>
    <experiments>2</experiments>
</comment>
<comment type="interaction">
    <interactant intactId="EBI-458006">
        <id>Q9R0N9</id>
    </interactant>
    <interactant intactId="EBI-457995">
        <id>O35681</id>
        <label>Syt3</label>
    </interactant>
    <organismsDiffer>false</organismsDiffer>
    <experiments>2</experiments>
</comment>
<comment type="interaction">
    <interactant intactId="EBI-458006">
        <id>Q9R0N9</id>
    </interactant>
    <interactant intactId="EBI-5239378">
        <id>Q9R0N8</id>
        <label>Syt6</label>
    </interactant>
    <organismsDiffer>false</organismsDiffer>
    <experiments>2</experiments>
</comment>
<comment type="interaction">
    <interactant intactId="EBI-458006">
        <id>Q9R0N9</id>
    </interactant>
    <interactant intactId="EBI-458006">
        <id>Q9R0N9</id>
        <label>Syt9</label>
    </interactant>
    <organismsDiffer>false</organismsDiffer>
    <experiments>2</experiments>
</comment>
<comment type="subcellular location">
    <subcellularLocation>
        <location>Cytoplasmic vesicle</location>
        <location>Secretory vesicle</location>
        <location>Synaptic vesicle membrane</location>
        <topology>Single-pass membrane protein</topology>
    </subcellularLocation>
</comment>
<comment type="domain">
    <text evidence="1">The cysteine motif mediates homo- or heterodimer formation via formation of disulfide bonds.</text>
</comment>
<comment type="similarity">
    <text evidence="11">Belongs to the synaptotagmin family.</text>
</comment>
<dbReference type="EMBL" id="AB026802">
    <property type="protein sequence ID" value="BAA85774.1"/>
    <property type="molecule type" value="mRNA"/>
</dbReference>
<dbReference type="EMBL" id="AK089115">
    <property type="protein sequence ID" value="BAC40759.1"/>
    <property type="molecule type" value="mRNA"/>
</dbReference>
<dbReference type="EMBL" id="AK156631">
    <property type="protein sequence ID" value="BAE33784.1"/>
    <property type="molecule type" value="mRNA"/>
</dbReference>
<dbReference type="EMBL" id="CH466531">
    <property type="protein sequence ID" value="EDL16861.1"/>
    <property type="molecule type" value="Genomic_DNA"/>
</dbReference>
<dbReference type="EMBL" id="BC132495">
    <property type="protein sequence ID" value="AAI32496.1"/>
    <property type="molecule type" value="mRNA"/>
</dbReference>
<dbReference type="EMBL" id="BC137904">
    <property type="protein sequence ID" value="AAI37905.1"/>
    <property type="molecule type" value="mRNA"/>
</dbReference>
<dbReference type="CCDS" id="CCDS40078.1"/>
<dbReference type="RefSeq" id="NP_068689.2">
    <property type="nucleotide sequence ID" value="NM_021889.4"/>
</dbReference>
<dbReference type="SMR" id="Q9R0N9"/>
<dbReference type="FunCoup" id="Q9R0N9">
    <property type="interactions" value="87"/>
</dbReference>
<dbReference type="IntAct" id="Q9R0N9">
    <property type="interactions" value="5"/>
</dbReference>
<dbReference type="STRING" id="10090.ENSMUSP00000073164"/>
<dbReference type="GlyGen" id="Q9R0N9">
    <property type="glycosylation" value="1 site"/>
</dbReference>
<dbReference type="iPTMnet" id="Q9R0N9"/>
<dbReference type="PhosphoSitePlus" id="Q9R0N9"/>
<dbReference type="SwissPalm" id="Q9R0N9"/>
<dbReference type="PaxDb" id="10090-ENSMUSP00000073164"/>
<dbReference type="PeptideAtlas" id="Q9R0N9"/>
<dbReference type="ProteomicsDB" id="253448"/>
<dbReference type="ABCD" id="Q9R0N9">
    <property type="antibodies" value="1 sequenced antibody"/>
</dbReference>
<dbReference type="Antibodypedia" id="42311">
    <property type="antibodies" value="153 antibodies from 28 providers"/>
</dbReference>
<dbReference type="DNASU" id="60510"/>
<dbReference type="Ensembl" id="ENSMUST00000073459.12">
    <property type="protein sequence ID" value="ENSMUSP00000073164.6"/>
    <property type="gene ID" value="ENSMUSG00000062542.12"/>
</dbReference>
<dbReference type="GeneID" id="60510"/>
<dbReference type="KEGG" id="mmu:60510"/>
<dbReference type="UCSC" id="uc009jba.1">
    <property type="organism name" value="mouse"/>
</dbReference>
<dbReference type="AGR" id="MGI:1926373"/>
<dbReference type="CTD" id="143425"/>
<dbReference type="MGI" id="MGI:1926373">
    <property type="gene designation" value="Syt9"/>
</dbReference>
<dbReference type="VEuPathDB" id="HostDB:ENSMUSG00000062542"/>
<dbReference type="eggNOG" id="KOG1028">
    <property type="taxonomic scope" value="Eukaryota"/>
</dbReference>
<dbReference type="GeneTree" id="ENSGT00940000155948"/>
<dbReference type="HOGENOM" id="CLU_023008_8_3_1"/>
<dbReference type="InParanoid" id="Q9R0N9"/>
<dbReference type="OMA" id="TRHNSIR"/>
<dbReference type="OrthoDB" id="67700at2759"/>
<dbReference type="PhylomeDB" id="Q9R0N9"/>
<dbReference type="TreeFam" id="TF315600"/>
<dbReference type="Reactome" id="R-MMU-8856825">
    <property type="pathway name" value="Cargo recognition for clathrin-mediated endocytosis"/>
</dbReference>
<dbReference type="Reactome" id="R-MMU-8856828">
    <property type="pathway name" value="Clathrin-mediated endocytosis"/>
</dbReference>
<dbReference type="BioGRID-ORCS" id="60510">
    <property type="hits" value="3 hits in 78 CRISPR screens"/>
</dbReference>
<dbReference type="ChiTaRS" id="Syt9">
    <property type="organism name" value="mouse"/>
</dbReference>
<dbReference type="PRO" id="PR:Q9R0N9"/>
<dbReference type="Proteomes" id="UP000000589">
    <property type="component" value="Chromosome 7"/>
</dbReference>
<dbReference type="RNAct" id="Q9R0N9">
    <property type="molecule type" value="protein"/>
</dbReference>
<dbReference type="Bgee" id="ENSMUSG00000062542">
    <property type="expression patterns" value="Expressed in habenula and 147 other cell types or tissues"/>
</dbReference>
<dbReference type="ExpressionAtlas" id="Q9R0N9">
    <property type="expression patterns" value="baseline and differential"/>
</dbReference>
<dbReference type="GO" id="GO:0031045">
    <property type="term" value="C:dense core granule"/>
    <property type="evidence" value="ECO:0000314"/>
    <property type="project" value="MGI"/>
</dbReference>
<dbReference type="GO" id="GO:0098686">
    <property type="term" value="C:hippocampal mossy fiber to CA3 synapse"/>
    <property type="evidence" value="ECO:0000314"/>
    <property type="project" value="SynGO"/>
</dbReference>
<dbReference type="GO" id="GO:0030672">
    <property type="term" value="C:synaptic vesicle membrane"/>
    <property type="evidence" value="ECO:0000314"/>
    <property type="project" value="SynGO"/>
</dbReference>
<dbReference type="GO" id="GO:0042802">
    <property type="term" value="F:identical protein binding"/>
    <property type="evidence" value="ECO:0000353"/>
    <property type="project" value="IntAct"/>
</dbReference>
<dbReference type="GO" id="GO:0046872">
    <property type="term" value="F:metal ion binding"/>
    <property type="evidence" value="ECO:0007669"/>
    <property type="project" value="UniProtKB-KW"/>
</dbReference>
<dbReference type="GO" id="GO:0005546">
    <property type="term" value="F:phosphatidylinositol-4,5-bisphosphate binding"/>
    <property type="evidence" value="ECO:0000314"/>
    <property type="project" value="ParkinsonsUK-UCL"/>
</dbReference>
<dbReference type="GO" id="GO:0001786">
    <property type="term" value="F:phosphatidylserine binding"/>
    <property type="evidence" value="ECO:0000314"/>
    <property type="project" value="ParkinsonsUK-UCL"/>
</dbReference>
<dbReference type="GO" id="GO:0000149">
    <property type="term" value="F:SNARE binding"/>
    <property type="evidence" value="ECO:0000314"/>
    <property type="project" value="ParkinsonsUK-UCL"/>
</dbReference>
<dbReference type="GO" id="GO:0099502">
    <property type="term" value="P:calcium-dependent activation of synaptic vesicle fusion"/>
    <property type="evidence" value="ECO:0000314"/>
    <property type="project" value="SynGO"/>
</dbReference>
<dbReference type="GO" id="GO:0017158">
    <property type="term" value="P:regulation of calcium ion-dependent exocytosis"/>
    <property type="evidence" value="ECO:0000315"/>
    <property type="project" value="ParkinsonsUK-UCL"/>
</dbReference>
<dbReference type="CDD" id="cd08403">
    <property type="entry name" value="C2B_Synaptotagmin-3-5-6-9-10"/>
    <property type="match status" value="1"/>
</dbReference>
<dbReference type="FunFam" id="2.60.40.150:FF:000005">
    <property type="entry name" value="Synaptotagmin 6"/>
    <property type="match status" value="1"/>
</dbReference>
<dbReference type="FunFam" id="2.60.40.150:FF:000011">
    <property type="entry name" value="Synaptotagmin 6"/>
    <property type="match status" value="1"/>
</dbReference>
<dbReference type="Gene3D" id="2.60.40.150">
    <property type="entry name" value="C2 domain"/>
    <property type="match status" value="2"/>
</dbReference>
<dbReference type="InterPro" id="IPR000008">
    <property type="entry name" value="C2_dom"/>
</dbReference>
<dbReference type="InterPro" id="IPR035892">
    <property type="entry name" value="C2_domain_sf"/>
</dbReference>
<dbReference type="InterPro" id="IPR001565">
    <property type="entry name" value="Synaptotagmin"/>
</dbReference>
<dbReference type="PANTHER" id="PTHR10024">
    <property type="entry name" value="SYNAPTOTAGMIN"/>
    <property type="match status" value="1"/>
</dbReference>
<dbReference type="PANTHER" id="PTHR10024:SF180">
    <property type="entry name" value="SYNAPTOTAGMIN-9"/>
    <property type="match status" value="1"/>
</dbReference>
<dbReference type="Pfam" id="PF00168">
    <property type="entry name" value="C2"/>
    <property type="match status" value="2"/>
</dbReference>
<dbReference type="PRINTS" id="PR00360">
    <property type="entry name" value="C2DOMAIN"/>
</dbReference>
<dbReference type="PRINTS" id="PR00399">
    <property type="entry name" value="SYNAPTOTAGMN"/>
</dbReference>
<dbReference type="SMART" id="SM00239">
    <property type="entry name" value="C2"/>
    <property type="match status" value="2"/>
</dbReference>
<dbReference type="SUPFAM" id="SSF49562">
    <property type="entry name" value="C2 domain (Calcium/lipid-binding domain, CaLB)"/>
    <property type="match status" value="2"/>
</dbReference>
<dbReference type="PROSITE" id="PS50004">
    <property type="entry name" value="C2"/>
    <property type="match status" value="2"/>
</dbReference>
<feature type="chain" id="PRO_0000183963" description="Synaptotagmin-9">
    <location>
        <begin position="1"/>
        <end position="491"/>
    </location>
</feature>
<feature type="topological domain" description="Vesicular" evidence="3">
    <location>
        <begin position="1"/>
        <end position="52"/>
    </location>
</feature>
<feature type="transmembrane region" description="Helical" evidence="3">
    <location>
        <begin position="53"/>
        <end position="73"/>
    </location>
</feature>
<feature type="topological domain" description="Cytoplasmic" evidence="3">
    <location>
        <begin position="74"/>
        <end position="491"/>
    </location>
</feature>
<feature type="domain" description="C2 1" evidence="4">
    <location>
        <begin position="220"/>
        <end position="341"/>
    </location>
</feature>
<feature type="domain" description="C2 2" evidence="4">
    <location>
        <begin position="352"/>
        <end position="485"/>
    </location>
</feature>
<feature type="region of interest" description="Cysteine motif" evidence="1">
    <location>
        <begin position="9"/>
        <end position="31"/>
    </location>
</feature>
<feature type="region of interest" description="Disordered" evidence="5">
    <location>
        <begin position="91"/>
        <end position="147"/>
    </location>
</feature>
<feature type="compositionally biased region" description="Polar residues" evidence="5">
    <location>
        <begin position="91"/>
        <end position="104"/>
    </location>
</feature>
<feature type="compositionally biased region" description="Acidic residues" evidence="5">
    <location>
        <begin position="105"/>
        <end position="116"/>
    </location>
</feature>
<feature type="compositionally biased region" description="Polar residues" evidence="5">
    <location>
        <begin position="127"/>
        <end position="144"/>
    </location>
</feature>
<feature type="binding site" evidence="4">
    <location>
        <position position="251"/>
    </location>
    <ligand>
        <name>Ca(2+)</name>
        <dbReference type="ChEBI" id="CHEBI:29108"/>
        <label>1</label>
    </ligand>
</feature>
<feature type="binding site" evidence="4">
    <location>
        <position position="251"/>
    </location>
    <ligand>
        <name>Ca(2+)</name>
        <dbReference type="ChEBI" id="CHEBI:29108"/>
        <label>2</label>
    </ligand>
</feature>
<feature type="binding site" evidence="4">
    <location>
        <position position="257"/>
    </location>
    <ligand>
        <name>Ca(2+)</name>
        <dbReference type="ChEBI" id="CHEBI:29108"/>
        <label>1</label>
    </ligand>
</feature>
<feature type="binding site" evidence="4">
    <location>
        <position position="309"/>
    </location>
    <ligand>
        <name>Ca(2+)</name>
        <dbReference type="ChEBI" id="CHEBI:29108"/>
        <label>1</label>
    </ligand>
</feature>
<feature type="binding site" evidence="4">
    <location>
        <position position="309"/>
    </location>
    <ligand>
        <name>Ca(2+)</name>
        <dbReference type="ChEBI" id="CHEBI:29108"/>
        <label>2</label>
    </ligand>
</feature>
<feature type="binding site" evidence="4">
    <location>
        <position position="310"/>
    </location>
    <ligand>
        <name>Ca(2+)</name>
        <dbReference type="ChEBI" id="CHEBI:29108"/>
        <label>1</label>
    </ligand>
</feature>
<feature type="binding site" evidence="4">
    <location>
        <position position="311"/>
    </location>
    <ligand>
        <name>Ca(2+)</name>
        <dbReference type="ChEBI" id="CHEBI:29108"/>
        <label>1</label>
    </ligand>
</feature>
<feature type="binding site" evidence="4">
    <location>
        <position position="311"/>
    </location>
    <ligand>
        <name>Ca(2+)</name>
        <dbReference type="ChEBI" id="CHEBI:29108"/>
        <label>2</label>
    </ligand>
</feature>
<feature type="binding site" evidence="4">
    <location>
        <position position="311"/>
    </location>
    <ligand>
        <name>Ca(2+)</name>
        <dbReference type="ChEBI" id="CHEBI:29108"/>
        <label>3</label>
    </ligand>
</feature>
<feature type="binding site" evidence="4">
    <location>
        <position position="314"/>
    </location>
    <ligand>
        <name>Ca(2+)</name>
        <dbReference type="ChEBI" id="CHEBI:29108"/>
        <label>3</label>
    </ligand>
</feature>
<feature type="binding site" evidence="4">
    <location>
        <position position="317"/>
    </location>
    <ligand>
        <name>Ca(2+)</name>
        <dbReference type="ChEBI" id="CHEBI:29108"/>
        <label>2</label>
    </ligand>
</feature>
<feature type="binding site" evidence="4">
    <location>
        <position position="317"/>
    </location>
    <ligand>
        <name>Ca(2+)</name>
        <dbReference type="ChEBI" id="CHEBI:29108"/>
        <label>3</label>
    </ligand>
</feature>
<feature type="binding site" evidence="4">
    <location>
        <position position="383"/>
    </location>
    <ligand>
        <name>Ca(2+)</name>
        <dbReference type="ChEBI" id="CHEBI:29108"/>
        <label>4</label>
    </ligand>
</feature>
<feature type="binding site" evidence="4">
    <location>
        <position position="389"/>
    </location>
    <ligand>
        <name>Ca(2+)</name>
        <dbReference type="ChEBI" id="CHEBI:29108"/>
        <label>4</label>
    </ligand>
</feature>
<feature type="binding site" evidence="4">
    <location>
        <position position="443"/>
    </location>
    <ligand>
        <name>Ca(2+)</name>
        <dbReference type="ChEBI" id="CHEBI:29108"/>
        <label>4</label>
    </ligand>
</feature>
<feature type="binding site" evidence="4">
    <location>
        <position position="445"/>
    </location>
    <ligand>
        <name>Ca(2+)</name>
        <dbReference type="ChEBI" id="CHEBI:29108"/>
        <label>4</label>
    </ligand>
</feature>
<feature type="modified residue" description="Phosphoserine" evidence="12">
    <location>
        <position position="177"/>
    </location>
</feature>
<feature type="sequence conflict" description="In Ref. 1; BAA85774." evidence="11" ref="1">
    <original>M</original>
    <variation>L</variation>
    <location>
        <position position="488"/>
    </location>
</feature>
<proteinExistence type="evidence at protein level"/>
<protein>
    <recommendedName>
        <fullName>Synaptotagmin-9</fullName>
    </recommendedName>
    <alternativeName>
        <fullName>Synaptotagmin IX</fullName>
        <shortName>SytIX</shortName>
    </alternativeName>
    <alternativeName>
        <fullName evidence="10">Synaptotagmin V</fullName>
    </alternativeName>
</protein>
<keyword id="KW-0106">Calcium</keyword>
<keyword id="KW-0968">Cytoplasmic vesicle</keyword>
<keyword id="KW-1015">Disulfide bond</keyword>
<keyword id="KW-0472">Membrane</keyword>
<keyword id="KW-0479">Metal-binding</keyword>
<keyword id="KW-0597">Phosphoprotein</keyword>
<keyword id="KW-1185">Reference proteome</keyword>
<keyword id="KW-0677">Repeat</keyword>
<keyword id="KW-0770">Synapse</keyword>
<keyword id="KW-0812">Transmembrane</keyword>
<keyword id="KW-1133">Transmembrane helix</keyword>
<accession>Q9R0N9</accession>
<accession>Q3U0R7</accession>
<accession>Q8C280</accession>
<evidence type="ECO:0000250" key="1">
    <source>
        <dbReference type="UniProtKB" id="O35681"/>
    </source>
</evidence>
<evidence type="ECO:0000250" key="2">
    <source>
        <dbReference type="UniProtKB" id="P40748"/>
    </source>
</evidence>
<evidence type="ECO:0000255" key="3"/>
<evidence type="ECO:0000255" key="4">
    <source>
        <dbReference type="PROSITE-ProRule" id="PRU00041"/>
    </source>
</evidence>
<evidence type="ECO:0000256" key="5">
    <source>
        <dbReference type="SAM" id="MobiDB-lite"/>
    </source>
</evidence>
<evidence type="ECO:0000269" key="6">
    <source>
    </source>
</evidence>
<evidence type="ECO:0000269" key="7">
    <source>
    </source>
</evidence>
<evidence type="ECO:0000269" key="8">
    <source>
    </source>
</evidence>
<evidence type="ECO:0000269" key="9">
    <source>
    </source>
</evidence>
<evidence type="ECO:0000303" key="10">
    <source>
    </source>
</evidence>
<evidence type="ECO:0000305" key="11"/>
<evidence type="ECO:0007744" key="12">
    <source>
    </source>
</evidence>
<reference key="1">
    <citation type="journal article" date="1999" name="J. Biol. Chem.">
        <title>Conserved N-terminal cysteine motif is essential for homo- and heterodimer formation of synaptotagmins III, V, VI, and X.</title>
        <authorList>
            <person name="Fukuda M."/>
            <person name="Kanno E."/>
            <person name="Mikoshiba K."/>
        </authorList>
    </citation>
    <scope>NUCLEOTIDE SEQUENCE [MRNA]</scope>
    <scope>SUBUNIT</scope>
    <scope>DISULFIDE BOND</scope>
    <source>
        <strain>ICR</strain>
        <tissue>Cerebellum</tissue>
    </source>
</reference>
<reference key="2">
    <citation type="journal article" date="2005" name="Science">
        <title>The transcriptional landscape of the mammalian genome.</title>
        <authorList>
            <person name="Carninci P."/>
            <person name="Kasukawa T."/>
            <person name="Katayama S."/>
            <person name="Gough J."/>
            <person name="Frith M.C."/>
            <person name="Maeda N."/>
            <person name="Oyama R."/>
            <person name="Ravasi T."/>
            <person name="Lenhard B."/>
            <person name="Wells C."/>
            <person name="Kodzius R."/>
            <person name="Shimokawa K."/>
            <person name="Bajic V.B."/>
            <person name="Brenner S.E."/>
            <person name="Batalov S."/>
            <person name="Forrest A.R."/>
            <person name="Zavolan M."/>
            <person name="Davis M.J."/>
            <person name="Wilming L.G."/>
            <person name="Aidinis V."/>
            <person name="Allen J.E."/>
            <person name="Ambesi-Impiombato A."/>
            <person name="Apweiler R."/>
            <person name="Aturaliya R.N."/>
            <person name="Bailey T.L."/>
            <person name="Bansal M."/>
            <person name="Baxter L."/>
            <person name="Beisel K.W."/>
            <person name="Bersano T."/>
            <person name="Bono H."/>
            <person name="Chalk A.M."/>
            <person name="Chiu K.P."/>
            <person name="Choudhary V."/>
            <person name="Christoffels A."/>
            <person name="Clutterbuck D.R."/>
            <person name="Crowe M.L."/>
            <person name="Dalla E."/>
            <person name="Dalrymple B.P."/>
            <person name="de Bono B."/>
            <person name="Della Gatta G."/>
            <person name="di Bernardo D."/>
            <person name="Down T."/>
            <person name="Engstrom P."/>
            <person name="Fagiolini M."/>
            <person name="Faulkner G."/>
            <person name="Fletcher C.F."/>
            <person name="Fukushima T."/>
            <person name="Furuno M."/>
            <person name="Futaki S."/>
            <person name="Gariboldi M."/>
            <person name="Georgii-Hemming P."/>
            <person name="Gingeras T.R."/>
            <person name="Gojobori T."/>
            <person name="Green R.E."/>
            <person name="Gustincich S."/>
            <person name="Harbers M."/>
            <person name="Hayashi Y."/>
            <person name="Hensch T.K."/>
            <person name="Hirokawa N."/>
            <person name="Hill D."/>
            <person name="Huminiecki L."/>
            <person name="Iacono M."/>
            <person name="Ikeo K."/>
            <person name="Iwama A."/>
            <person name="Ishikawa T."/>
            <person name="Jakt M."/>
            <person name="Kanapin A."/>
            <person name="Katoh M."/>
            <person name="Kawasawa Y."/>
            <person name="Kelso J."/>
            <person name="Kitamura H."/>
            <person name="Kitano H."/>
            <person name="Kollias G."/>
            <person name="Krishnan S.P."/>
            <person name="Kruger A."/>
            <person name="Kummerfeld S.K."/>
            <person name="Kurochkin I.V."/>
            <person name="Lareau L.F."/>
            <person name="Lazarevic D."/>
            <person name="Lipovich L."/>
            <person name="Liu J."/>
            <person name="Liuni S."/>
            <person name="McWilliam S."/>
            <person name="Madan Babu M."/>
            <person name="Madera M."/>
            <person name="Marchionni L."/>
            <person name="Matsuda H."/>
            <person name="Matsuzawa S."/>
            <person name="Miki H."/>
            <person name="Mignone F."/>
            <person name="Miyake S."/>
            <person name="Morris K."/>
            <person name="Mottagui-Tabar S."/>
            <person name="Mulder N."/>
            <person name="Nakano N."/>
            <person name="Nakauchi H."/>
            <person name="Ng P."/>
            <person name="Nilsson R."/>
            <person name="Nishiguchi S."/>
            <person name="Nishikawa S."/>
            <person name="Nori F."/>
            <person name="Ohara O."/>
            <person name="Okazaki Y."/>
            <person name="Orlando V."/>
            <person name="Pang K.C."/>
            <person name="Pavan W.J."/>
            <person name="Pavesi G."/>
            <person name="Pesole G."/>
            <person name="Petrovsky N."/>
            <person name="Piazza S."/>
            <person name="Reed J."/>
            <person name="Reid J.F."/>
            <person name="Ring B.Z."/>
            <person name="Ringwald M."/>
            <person name="Rost B."/>
            <person name="Ruan Y."/>
            <person name="Salzberg S.L."/>
            <person name="Sandelin A."/>
            <person name="Schneider C."/>
            <person name="Schoenbach C."/>
            <person name="Sekiguchi K."/>
            <person name="Semple C.A."/>
            <person name="Seno S."/>
            <person name="Sessa L."/>
            <person name="Sheng Y."/>
            <person name="Shibata Y."/>
            <person name="Shimada H."/>
            <person name="Shimada K."/>
            <person name="Silva D."/>
            <person name="Sinclair B."/>
            <person name="Sperling S."/>
            <person name="Stupka E."/>
            <person name="Sugiura K."/>
            <person name="Sultana R."/>
            <person name="Takenaka Y."/>
            <person name="Taki K."/>
            <person name="Tammoja K."/>
            <person name="Tan S.L."/>
            <person name="Tang S."/>
            <person name="Taylor M.S."/>
            <person name="Tegner J."/>
            <person name="Teichmann S.A."/>
            <person name="Ueda H.R."/>
            <person name="van Nimwegen E."/>
            <person name="Verardo R."/>
            <person name="Wei C.L."/>
            <person name="Yagi K."/>
            <person name="Yamanishi H."/>
            <person name="Zabarovsky E."/>
            <person name="Zhu S."/>
            <person name="Zimmer A."/>
            <person name="Hide W."/>
            <person name="Bult C."/>
            <person name="Grimmond S.M."/>
            <person name="Teasdale R.D."/>
            <person name="Liu E.T."/>
            <person name="Brusic V."/>
            <person name="Quackenbush J."/>
            <person name="Wahlestedt C."/>
            <person name="Mattick J.S."/>
            <person name="Hume D.A."/>
            <person name="Kai C."/>
            <person name="Sasaki D."/>
            <person name="Tomaru Y."/>
            <person name="Fukuda S."/>
            <person name="Kanamori-Katayama M."/>
            <person name="Suzuki M."/>
            <person name="Aoki J."/>
            <person name="Arakawa T."/>
            <person name="Iida J."/>
            <person name="Imamura K."/>
            <person name="Itoh M."/>
            <person name="Kato T."/>
            <person name="Kawaji H."/>
            <person name="Kawagashira N."/>
            <person name="Kawashima T."/>
            <person name="Kojima M."/>
            <person name="Kondo S."/>
            <person name="Konno H."/>
            <person name="Nakano K."/>
            <person name="Ninomiya N."/>
            <person name="Nishio T."/>
            <person name="Okada M."/>
            <person name="Plessy C."/>
            <person name="Shibata K."/>
            <person name="Shiraki T."/>
            <person name="Suzuki S."/>
            <person name="Tagami M."/>
            <person name="Waki K."/>
            <person name="Watahiki A."/>
            <person name="Okamura-Oho Y."/>
            <person name="Suzuki H."/>
            <person name="Kawai J."/>
            <person name="Hayashizaki Y."/>
        </authorList>
    </citation>
    <scope>NUCLEOTIDE SEQUENCE [LARGE SCALE MRNA]</scope>
    <source>
        <strain>C57BL/6J</strain>
        <strain>NOD</strain>
        <tissue>Olfactory bulb</tissue>
        <tissue>Spleen</tissue>
    </source>
</reference>
<reference key="3">
    <citation type="submission" date="2005-07" db="EMBL/GenBank/DDBJ databases">
        <authorList>
            <person name="Mural R.J."/>
            <person name="Adams M.D."/>
            <person name="Myers E.W."/>
            <person name="Smith H.O."/>
            <person name="Venter J.C."/>
        </authorList>
    </citation>
    <scope>NUCLEOTIDE SEQUENCE [LARGE SCALE GENOMIC DNA]</scope>
</reference>
<reference key="4">
    <citation type="journal article" date="2004" name="Genome Res.">
        <title>The status, quality, and expansion of the NIH full-length cDNA project: the Mammalian Gene Collection (MGC).</title>
        <authorList>
            <consortium name="The MGC Project Team"/>
        </authorList>
    </citation>
    <scope>NUCLEOTIDE SEQUENCE [LARGE SCALE MRNA]</scope>
    <source>
        <tissue>Brain</tissue>
    </source>
</reference>
<reference key="5">
    <citation type="journal article" date="1999" name="J. Biol. Chem.">
        <title>A novel alternatively spliced variant of synaptotagmin VI lacking a transmembrane domain. Implications for distinct functions of the two isoforms.</title>
        <authorList>
            <person name="Fukuda M."/>
            <person name="Mikoshiba K."/>
        </authorList>
    </citation>
    <scope>SUBUNIT</scope>
    <source>
        <strain>ICR</strain>
        <tissue>Cerebellum</tissue>
    </source>
</reference>
<reference key="6">
    <citation type="journal article" date="2000" name="J. Biol. Chem.">
        <title>Distinct self-oligomerization activities of synaptotagmin family. Unique calcium-dependent oligomerization properties of synaptotagmin VII.</title>
        <authorList>
            <person name="Fukuda M."/>
            <person name="Mikoshiba K."/>
        </authorList>
    </citation>
    <scope>SUBUNIT</scope>
</reference>
<reference key="7">
    <citation type="journal article" date="2010" name="Cell">
        <title>A tissue-specific atlas of mouse protein phosphorylation and expression.</title>
        <authorList>
            <person name="Huttlin E.L."/>
            <person name="Jedrychowski M.P."/>
            <person name="Elias J.E."/>
            <person name="Goswami T."/>
            <person name="Rad R."/>
            <person name="Beausoleil S.A."/>
            <person name="Villen J."/>
            <person name="Haas W."/>
            <person name="Sowa M.E."/>
            <person name="Gygi S.P."/>
        </authorList>
    </citation>
    <scope>PHOSPHORYLATION [LARGE SCALE ANALYSIS] AT SER-177</scope>
    <scope>IDENTIFICATION BY MASS SPECTROMETRY [LARGE SCALE ANALYSIS]</scope>
    <source>
        <tissue>Brain</tissue>
    </source>
</reference>
<reference key="8">
    <citation type="journal article" date="2011" name="FASEB J.">
        <title>A charged prominence in the linker domain of the cysteine-string protein Cspalpha mediates its regulated interaction with the calcium sensor synaptotagmin 9 during exocytosis.</title>
        <authorList>
            <person name="Boal F."/>
            <person name="Laguerre M."/>
            <person name="Milochau A."/>
            <person name="Lang J."/>
            <person name="Scotti P.A."/>
        </authorList>
    </citation>
    <scope>INTERACTION WITH DNAJC5 AND SNAP25</scope>
    <scope>LACK OF INTERACTION WITH HSC70</scope>
</reference>
<sequence length="491" mass="56265">MPGARDALCHQALQLLAELCARGALEHDSCQDFIYHLRDRARPRLRDPDISVSLLTLVVTACGLALFGVSLFVSWKLCWVPWRERGLFSGSKDNNQEPLNYTDTETNEQENSEDFLDPPTPCPDSSMKISHTSPDIPLSTQPGGQENCAHAVRVQRQVTEPTPSARHNSIRRQLNLSNPDFNIQQLQRQEQLTGIGRIKPELYKQRSLDNDDGRRSNSKACGKLNFILKYDCDLEQLIVKIHKAVNLPAKDFSGTSDPYVKIYLLPDRKTKHQTKVHRKTLNPVFDEVFLFPVHYNDLEARKLHFSVYDFDRFSRHDLIGQVVVDHFFDLADFPRECILWKDIEYVTNDNVDLGELMFSLCYLPTAGRLTITIIKARNLKAMDITGASDPYVKVSLMCDGRRLKKRKTSTKRNTLNPVYNEAIVFDVPPESIDQIHLSIAVMDYDRVGHNEVIGVCQVGNEAERLGRDHWSEMLSYPRKPIAHWHSLMEKR</sequence>
<organism>
    <name type="scientific">Mus musculus</name>
    <name type="common">Mouse</name>
    <dbReference type="NCBI Taxonomy" id="10090"/>
    <lineage>
        <taxon>Eukaryota</taxon>
        <taxon>Metazoa</taxon>
        <taxon>Chordata</taxon>
        <taxon>Craniata</taxon>
        <taxon>Vertebrata</taxon>
        <taxon>Euteleostomi</taxon>
        <taxon>Mammalia</taxon>
        <taxon>Eutheria</taxon>
        <taxon>Euarchontoglires</taxon>
        <taxon>Glires</taxon>
        <taxon>Rodentia</taxon>
        <taxon>Myomorpha</taxon>
        <taxon>Muroidea</taxon>
        <taxon>Muridae</taxon>
        <taxon>Murinae</taxon>
        <taxon>Mus</taxon>
        <taxon>Mus</taxon>
    </lineage>
</organism>